<dbReference type="EMBL" id="AY013345">
    <property type="protein sequence ID" value="AAG50366.1"/>
    <property type="molecule type" value="Genomic_DNA"/>
</dbReference>
<dbReference type="EMBL" id="AF393343">
    <property type="protein sequence ID" value="AAK72021.1"/>
    <property type="molecule type" value="Genomic_DNA"/>
</dbReference>
<dbReference type="EMBL" id="AF393344">
    <property type="protein sequence ID" value="AAK72022.1"/>
    <property type="molecule type" value="Genomic_DNA"/>
</dbReference>
<dbReference type="EMBL" id="AF393345">
    <property type="protein sequence ID" value="AAK72023.1"/>
    <property type="molecule type" value="Genomic_DNA"/>
</dbReference>
<dbReference type="EMBL" id="AF393346">
    <property type="protein sequence ID" value="AAK72024.1"/>
    <property type="molecule type" value="Genomic_DNA"/>
</dbReference>
<dbReference type="EMBL" id="AF393347">
    <property type="protein sequence ID" value="AAK72025.1"/>
    <property type="molecule type" value="Genomic_DNA"/>
</dbReference>
<dbReference type="EMBL" id="AF393348">
    <property type="protein sequence ID" value="AAK72026.1"/>
    <property type="molecule type" value="Genomic_DNA"/>
</dbReference>
<dbReference type="EMBL" id="AF393349">
    <property type="protein sequence ID" value="AAK72027.1"/>
    <property type="molecule type" value="Genomic_DNA"/>
</dbReference>
<dbReference type="EMBL" id="AF393350">
    <property type="protein sequence ID" value="AAK72028.1"/>
    <property type="molecule type" value="Genomic_DNA"/>
</dbReference>
<dbReference type="EMBL" id="AF393351">
    <property type="protein sequence ID" value="AAK72029.1"/>
    <property type="molecule type" value="Genomic_DNA"/>
</dbReference>
<dbReference type="EMBL" id="AF393352">
    <property type="protein sequence ID" value="AAK72030.1"/>
    <property type="molecule type" value="Genomic_DNA"/>
</dbReference>
<dbReference type="EMBL" id="AF393353">
    <property type="protein sequence ID" value="AAK72031.1"/>
    <property type="molecule type" value="Genomic_DNA"/>
</dbReference>
<dbReference type="EMBL" id="AF393354">
    <property type="protein sequence ID" value="AAK72032.1"/>
    <property type="molecule type" value="Genomic_DNA"/>
</dbReference>
<dbReference type="EMBL" id="AF393355">
    <property type="protein sequence ID" value="AAK72033.1"/>
    <property type="molecule type" value="Genomic_DNA"/>
</dbReference>
<dbReference type="EMBL" id="AY663133">
    <property type="protein sequence ID" value="AAU44623.1"/>
    <property type="molecule type" value="Genomic_DNA"/>
</dbReference>
<dbReference type="EMBL" id="AY663134">
    <property type="protein sequence ID" value="AAU44624.1"/>
    <property type="molecule type" value="Genomic_DNA"/>
</dbReference>
<dbReference type="EMBL" id="AY663135">
    <property type="protein sequence ID" value="AAU44625.1"/>
    <property type="molecule type" value="Genomic_DNA"/>
</dbReference>
<dbReference type="EMBL" id="AY663136">
    <property type="protein sequence ID" value="AAU44626.1"/>
    <property type="molecule type" value="Genomic_DNA"/>
</dbReference>
<dbReference type="EMBL" id="AY663137">
    <property type="protein sequence ID" value="AAU44627.1"/>
    <property type="molecule type" value="Genomic_DNA"/>
</dbReference>
<dbReference type="EMBL" id="AY663138">
    <property type="protein sequence ID" value="AAU44628.1"/>
    <property type="molecule type" value="Genomic_DNA"/>
</dbReference>
<dbReference type="EMBL" id="AY663139">
    <property type="protein sequence ID" value="AAU44629.1"/>
    <property type="molecule type" value="Genomic_DNA"/>
</dbReference>
<dbReference type="EMBL" id="AY663140">
    <property type="protein sequence ID" value="AAU44630.1"/>
    <property type="molecule type" value="Genomic_DNA"/>
</dbReference>
<dbReference type="EMBL" id="AY663141">
    <property type="protein sequence ID" value="AAU44631.1"/>
    <property type="molecule type" value="Genomic_DNA"/>
</dbReference>
<dbReference type="EMBL" id="AY663142">
    <property type="protein sequence ID" value="AAU44632.1"/>
    <property type="molecule type" value="Genomic_DNA"/>
</dbReference>
<dbReference type="EMBL" id="AY663143">
    <property type="protein sequence ID" value="AAU44633.1"/>
    <property type="molecule type" value="Genomic_DNA"/>
</dbReference>
<dbReference type="EMBL" id="AY663144">
    <property type="protein sequence ID" value="AAU44634.1"/>
    <property type="molecule type" value="Genomic_DNA"/>
</dbReference>
<dbReference type="EMBL" id="AY663145">
    <property type="protein sequence ID" value="AAU44635.1"/>
    <property type="molecule type" value="Genomic_DNA"/>
</dbReference>
<dbReference type="EMBL" id="AY663146">
    <property type="protein sequence ID" value="AAU44636.1"/>
    <property type="molecule type" value="Genomic_DNA"/>
</dbReference>
<dbReference type="EMBL" id="AY663147">
    <property type="protein sequence ID" value="AAU44637.1"/>
    <property type="molecule type" value="Genomic_DNA"/>
</dbReference>
<dbReference type="EMBL" id="AY663148">
    <property type="protein sequence ID" value="AAU44638.1"/>
    <property type="molecule type" value="Genomic_DNA"/>
</dbReference>
<dbReference type="EMBL" id="AY663149">
    <property type="protein sequence ID" value="AAU44639.1"/>
    <property type="molecule type" value="Genomic_DNA"/>
</dbReference>
<dbReference type="EMBL" id="AY663150">
    <property type="protein sequence ID" value="AAU44640.1"/>
    <property type="molecule type" value="Genomic_DNA"/>
</dbReference>
<dbReference type="EMBL" id="AY663151">
    <property type="protein sequence ID" value="AAU44641.1"/>
    <property type="molecule type" value="Genomic_DNA"/>
</dbReference>
<dbReference type="EMBL" id="AY663152">
    <property type="protein sequence ID" value="AAU44642.1"/>
    <property type="molecule type" value="Genomic_DNA"/>
</dbReference>
<dbReference type="EMBL" id="AY663153">
    <property type="protein sequence ID" value="AAU44643.1"/>
    <property type="molecule type" value="Genomic_DNA"/>
</dbReference>
<dbReference type="EMBL" id="AY663154">
    <property type="protein sequence ID" value="AAU44644.1"/>
    <property type="molecule type" value="Genomic_DNA"/>
</dbReference>
<dbReference type="EMBL" id="AF284453">
    <property type="protein sequence ID" value="AAG49467.1"/>
    <property type="molecule type" value="Genomic_DNA"/>
</dbReference>
<dbReference type="EMBL" id="AF284454">
    <property type="protein sequence ID" value="AAG49469.1"/>
    <property type="molecule type" value="Genomic_DNA"/>
</dbReference>
<dbReference type="EMBL" id="AF284455">
    <property type="protein sequence ID" value="AAG49471.1"/>
    <property type="molecule type" value="Genomic_DNA"/>
</dbReference>
<dbReference type="SMR" id="Q9BM95"/>
<dbReference type="EnsemblMetazoa" id="FBtr0217320">
    <property type="protein sequence ID" value="FBpp0215812"/>
    <property type="gene ID" value="FBgn0041268"/>
</dbReference>
<dbReference type="EnsemblMetazoa" id="XM_002105418.3">
    <property type="protein sequence ID" value="XP_002105454.2"/>
    <property type="gene ID" value="LOC6730163"/>
</dbReference>
<dbReference type="GeneID" id="6730163"/>
<dbReference type="KEGG" id="dsi:Dsimw501_GD17410"/>
<dbReference type="OrthoDB" id="10249612at2759"/>
<dbReference type="Bgee" id="FBgn0041268">
    <property type="expression patterns" value="Expressed in male reproductive system and 3 other cell types or tissues"/>
</dbReference>
<dbReference type="GO" id="GO:0005829">
    <property type="term" value="C:cytosol"/>
    <property type="evidence" value="ECO:0007669"/>
    <property type="project" value="TreeGrafter"/>
</dbReference>
<dbReference type="GO" id="GO:0101006">
    <property type="term" value="F:protein histidine phosphatase activity"/>
    <property type="evidence" value="ECO:0007669"/>
    <property type="project" value="TreeGrafter"/>
</dbReference>
<dbReference type="GO" id="GO:0030154">
    <property type="term" value="P:cell differentiation"/>
    <property type="evidence" value="ECO:0007669"/>
    <property type="project" value="UniProtKB-KW"/>
</dbReference>
<dbReference type="GO" id="GO:0007548">
    <property type="term" value="P:sex differentiation"/>
    <property type="evidence" value="ECO:0000250"/>
    <property type="project" value="UniProtKB"/>
</dbReference>
<dbReference type="FunFam" id="3.50.20.20:FF:000002">
    <property type="entry name" value="Sex-regulated protein janus-B"/>
    <property type="match status" value="1"/>
</dbReference>
<dbReference type="Gene3D" id="3.50.20.20">
    <property type="entry name" value="Janus/Ocnus"/>
    <property type="match status" value="1"/>
</dbReference>
<dbReference type="InterPro" id="IPR007702">
    <property type="entry name" value="Janus"/>
</dbReference>
<dbReference type="InterPro" id="IPR038596">
    <property type="entry name" value="Janus_sf"/>
</dbReference>
<dbReference type="PANTHER" id="PTHR12258:SF5">
    <property type="entry name" value="BCDNA.GH02250-RELATED"/>
    <property type="match status" value="1"/>
</dbReference>
<dbReference type="PANTHER" id="PTHR12258">
    <property type="entry name" value="JANUS-A/JANUS-B"/>
    <property type="match status" value="1"/>
</dbReference>
<dbReference type="Pfam" id="PF05005">
    <property type="entry name" value="Ocnus"/>
    <property type="match status" value="1"/>
</dbReference>
<dbReference type="SUPFAM" id="SSF143724">
    <property type="entry name" value="PHP14-like"/>
    <property type="match status" value="1"/>
</dbReference>
<feature type="chain" id="PRO_0000206170" description="Sex-regulated protein janus-B">
    <location>
        <begin position="1"/>
        <end position="140"/>
    </location>
</feature>
<feature type="active site" description="Proton acceptor" evidence="1">
    <location>
        <position position="69"/>
    </location>
</feature>
<feature type="binding site" evidence="1">
    <location>
        <position position="42"/>
    </location>
    <ligand>
        <name>substrate</name>
    </ligand>
</feature>
<feature type="binding site" evidence="1">
    <location>
        <begin position="110"/>
        <end position="112"/>
    </location>
    <ligand>
        <name>substrate</name>
    </ligand>
</feature>
<feature type="sequence variant" description="In strain: kenya_2." evidence="2">
    <original>N</original>
    <variation>S</variation>
    <location>
        <position position="27"/>
    </location>
</feature>
<feature type="sequence variant" description="In strain: kenya_2." evidence="2">
    <original>I</original>
    <variation>V</variation>
    <location>
        <position position="72"/>
    </location>
</feature>
<comment type="function">
    <text evidence="1">JanA and janB regulate somatic sex differentiation.</text>
</comment>
<comment type="similarity">
    <text evidence="3">Belongs to the janus family.</text>
</comment>
<keyword id="KW-0221">Differentiation</keyword>
<keyword id="KW-0726">Sexual differentiation</keyword>
<accession>Q9BM95</accession>
<accession>Q5Y7X3</accession>
<accession>Q9BH62</accession>
<accession>Q9BMZ6</accession>
<gene>
    <name type="primary">janB</name>
</gene>
<reference evidence="7" key="1">
    <citation type="journal article" date="2001" name="Mol. Biol. Evol.">
        <title>Molecular evolution of the ocnus and janus genes in the Drosophila melanogaster species subgroup.</title>
        <authorList>
            <person name="Parsch J."/>
            <person name="Meiklejohn C.D."/>
            <person name="Hauschteck-Jungen E."/>
            <person name="Hunziker P."/>
            <person name="Hartl D.L."/>
        </authorList>
    </citation>
    <scope>NUCLEOTIDE SEQUENCE [GENOMIC DNA]</scope>
</reference>
<reference evidence="20" key="2">
    <citation type="journal article" date="2001" name="Genetics">
        <title>Patterns of DNA sequence variation suggest the recent action of positive selection in the janus-ocnus region of Drosophila simulans.</title>
        <authorList>
            <person name="Parsch J."/>
            <person name="Meiklejohn C.D."/>
            <person name="Hartl D.L."/>
        </authorList>
    </citation>
    <scope>NUCLEOTIDE SEQUENCE [GENOMIC DNA]</scope>
    <source>
        <strain evidence="15">s17</strain>
        <strain evidence="16">s19</strain>
        <strain evidence="8">s2</strain>
        <strain evidence="17">s25</strain>
        <strain evidence="9">s3</strain>
        <strain evidence="18">s31</strain>
        <strain evidence="19">s34</strain>
        <strain evidence="20">s36</strain>
        <strain evidence="10">s4</strain>
        <strain evidence="11">s5</strain>
        <strain evidence="12">s6</strain>
        <strain evidence="13">s7</strain>
        <strain evidence="14">s8</strain>
    </source>
</reference>
<reference key="3">
    <citation type="journal article" date="2004" name="Genetics">
        <title>Identification of a locus under complex positive selection in Drosophila simulans by haplotype mapping and composite-likelihood estimation.</title>
        <authorList>
            <person name="Meiklejohn C.D."/>
            <person name="Kim Y."/>
            <person name="Hartl D.L."/>
            <person name="Parsch J."/>
        </authorList>
    </citation>
    <scope>NUCLEOTIDE SEQUENCE [GENOMIC DNA]</scope>
    <source>
        <strain>S10</strain>
        <strain>S11</strain>
        <strain>S12</strain>
        <strain>S13</strain>
        <strain>S14</strain>
        <strain>S15</strain>
        <strain>S16</strain>
        <strain>S18</strain>
        <strain>S20</strain>
        <strain>S21</strain>
        <strain>S22</strain>
        <strain>S23</strain>
        <strain>S24</strain>
        <strain>S26</strain>
        <strain>S27</strain>
        <strain>S28</strain>
        <strain>S29</strain>
        <strain>S30</strain>
        <strain>S32</strain>
        <strain>S33</strain>
        <strain>S35</strain>
        <strain>S9</strain>
    </source>
</reference>
<reference evidence="3" key="4">
    <citation type="journal article" date="2000" name="Genetics">
        <title>The population genetics of the origin and divergence of the Drosophila simulans complex species.</title>
        <authorList>
            <person name="Kliman R.M."/>
            <person name="Andolfatto P."/>
            <person name="Coyne J.A."/>
            <person name="Depaulis F."/>
            <person name="Kreitman M."/>
            <person name="Berry A.J."/>
            <person name="McCarter J."/>
            <person name="Wakeley J."/>
            <person name="Hey J."/>
        </authorList>
    </citation>
    <scope>NUCLEOTIDE SEQUENCE [GENOMIC DNA] OF 1-76</scope>
    <source>
        <strain evidence="6">kenya_12</strain>
        <strain evidence="4">kenya_2</strain>
        <strain evidence="5">kenya_5</strain>
    </source>
</reference>
<protein>
    <recommendedName>
        <fullName>Sex-regulated protein janus-B</fullName>
    </recommendedName>
</protein>
<name>JANB_DROSI</name>
<proteinExistence type="inferred from homology"/>
<evidence type="ECO:0000250" key="1"/>
<evidence type="ECO:0000269" key="2">
    <source>
    </source>
</evidence>
<evidence type="ECO:0000305" key="3"/>
<evidence type="ECO:0000312" key="4">
    <source>
        <dbReference type="EMBL" id="AAG49467.1"/>
    </source>
</evidence>
<evidence type="ECO:0000312" key="5">
    <source>
        <dbReference type="EMBL" id="AAG49469.1"/>
    </source>
</evidence>
<evidence type="ECO:0000312" key="6">
    <source>
        <dbReference type="EMBL" id="AAG49471.1"/>
    </source>
</evidence>
<evidence type="ECO:0000312" key="7">
    <source>
        <dbReference type="EMBL" id="AAG50366.1"/>
    </source>
</evidence>
<evidence type="ECO:0000312" key="8">
    <source>
        <dbReference type="EMBL" id="AAK72021.1"/>
    </source>
</evidence>
<evidence type="ECO:0000312" key="9">
    <source>
        <dbReference type="EMBL" id="AAK72022.1"/>
    </source>
</evidence>
<evidence type="ECO:0000312" key="10">
    <source>
        <dbReference type="EMBL" id="AAK72023.1"/>
    </source>
</evidence>
<evidence type="ECO:0000312" key="11">
    <source>
        <dbReference type="EMBL" id="AAK72024.1"/>
    </source>
</evidence>
<evidence type="ECO:0000312" key="12">
    <source>
        <dbReference type="EMBL" id="AAK72025.1"/>
    </source>
</evidence>
<evidence type="ECO:0000312" key="13">
    <source>
        <dbReference type="EMBL" id="AAK72026.1"/>
    </source>
</evidence>
<evidence type="ECO:0000312" key="14">
    <source>
        <dbReference type="EMBL" id="AAK72027.1"/>
    </source>
</evidence>
<evidence type="ECO:0000312" key="15">
    <source>
        <dbReference type="EMBL" id="AAK72028.1"/>
    </source>
</evidence>
<evidence type="ECO:0000312" key="16">
    <source>
        <dbReference type="EMBL" id="AAK72029.1"/>
    </source>
</evidence>
<evidence type="ECO:0000312" key="17">
    <source>
        <dbReference type="EMBL" id="AAK72030.1"/>
    </source>
</evidence>
<evidence type="ECO:0000312" key="18">
    <source>
        <dbReference type="EMBL" id="AAK72031.1"/>
    </source>
</evidence>
<evidence type="ECO:0000312" key="19">
    <source>
        <dbReference type="EMBL" id="AAK72032.1"/>
    </source>
</evidence>
<evidence type="ECO:0000312" key="20">
    <source>
        <dbReference type="EMBL" id="AAK72033.1"/>
    </source>
</evidence>
<sequence>MKMFKSLSLIPRIVSPFQKCYSTDLINLVGVPRVKITKGQNRYLLVNIHTHGFTKYGRVIVRGADVDNHLAIFDSILEELEPEGICAKILGGGRILNEPDNKKIKIYGTSRTFGGADHTRTRNILQAWTTYKDFKITVKQ</sequence>
<organism evidence="7">
    <name type="scientific">Drosophila simulans</name>
    <name type="common">Fruit fly</name>
    <dbReference type="NCBI Taxonomy" id="7240"/>
    <lineage>
        <taxon>Eukaryota</taxon>
        <taxon>Metazoa</taxon>
        <taxon>Ecdysozoa</taxon>
        <taxon>Arthropoda</taxon>
        <taxon>Hexapoda</taxon>
        <taxon>Insecta</taxon>
        <taxon>Pterygota</taxon>
        <taxon>Neoptera</taxon>
        <taxon>Endopterygota</taxon>
        <taxon>Diptera</taxon>
        <taxon>Brachycera</taxon>
        <taxon>Muscomorpha</taxon>
        <taxon>Ephydroidea</taxon>
        <taxon>Drosophilidae</taxon>
        <taxon>Drosophila</taxon>
        <taxon>Sophophora</taxon>
    </lineage>
</organism>